<comment type="function">
    <text evidence="1">Mono-ADP-ribosylates eukaryotic muscle and non-muscle actin on 'Arg-177'. ADP-ribosylation prevents the polymerization of G-actin to F-actin, causing actin filament depolymerization, destruction of the cytoskeleton and cytotoxicity. Does not possess NAD(+)-glycohydrolase activity, unlike most mART enzymes (By similarity).</text>
</comment>
<comment type="catalytic activity">
    <reaction>
        <text>L-arginyl-[protein] + NAD(+) = N(omega)-(ADP-D-ribosyl)-L-arginyl-[protein] + nicotinamide + H(+)</text>
        <dbReference type="Rhea" id="RHEA:19149"/>
        <dbReference type="Rhea" id="RHEA-COMP:10532"/>
        <dbReference type="Rhea" id="RHEA-COMP:15087"/>
        <dbReference type="ChEBI" id="CHEBI:15378"/>
        <dbReference type="ChEBI" id="CHEBI:17154"/>
        <dbReference type="ChEBI" id="CHEBI:29965"/>
        <dbReference type="ChEBI" id="CHEBI:57540"/>
        <dbReference type="ChEBI" id="CHEBI:142554"/>
        <dbReference type="EC" id="2.4.2.31"/>
    </reaction>
</comment>
<comment type="subcellular location">
    <subcellularLocation>
        <location>Secreted</location>
    </subcellularLocation>
    <text evidence="1">Secreted via the type III secretion system 2 (SPI-2 T3SS).</text>
</comment>
<comment type="miscellaneous">
    <text>In Salmonella spp. the spv gene cluster is encoded on a highly transmissible plasmid.</text>
</comment>
<comment type="similarity">
    <text evidence="3">Belongs to the SpvB family.</text>
</comment>
<feature type="chain" id="PRO_0000221663" description="Mono(ADP-ribosyl)transferase SpvB">
    <location>
        <begin position="1"/>
        <end position="591"/>
    </location>
</feature>
<feature type="domain" description="TR mART core" evidence="2">
    <location>
        <begin position="373"/>
        <end position="576"/>
    </location>
</feature>
<feature type="active site" evidence="2">
    <location>
        <position position="471"/>
    </location>
</feature>
<feature type="active site" evidence="2">
    <location>
        <position position="501"/>
    </location>
</feature>
<feature type="active site" evidence="2">
    <location>
        <position position="538"/>
    </location>
</feature>
<feature type="sequence conflict" description="In Ref. 1; CAA36278 and 2; BAB20511." evidence="3" ref="1 2">
    <original>C</original>
    <variation>S</variation>
    <location>
        <position position="118"/>
    </location>
</feature>
<feature type="sequence conflict" description="In Ref. 1; CAA36278 and 2; BAB20511." evidence="3" ref="1 2">
    <original>A</original>
    <variation>R</variation>
    <location>
        <position position="403"/>
    </location>
</feature>
<accession>P17450</accession>
<accession>Q5J4C8</accession>
<accession>Q7DIJ8</accession>
<organism>
    <name type="scientific">Salmonella choleraesuis (strain SC-B67)</name>
    <dbReference type="NCBI Taxonomy" id="321314"/>
    <lineage>
        <taxon>Bacteria</taxon>
        <taxon>Pseudomonadati</taxon>
        <taxon>Pseudomonadota</taxon>
        <taxon>Gammaproteobacteria</taxon>
        <taxon>Enterobacterales</taxon>
        <taxon>Enterobacteriaceae</taxon>
        <taxon>Salmonella</taxon>
    </lineage>
</organism>
<geneLocation type="plasmid">
    <name>pKDSc50</name>
</geneLocation>
<geneLocation type="plasmid">
    <name>pSCV50</name>
</geneLocation>
<dbReference type="EC" id="2.4.2.31"/>
<dbReference type="EMBL" id="X52035">
    <property type="protein sequence ID" value="CAA36278.1"/>
    <property type="molecule type" value="Genomic_DNA"/>
</dbReference>
<dbReference type="EMBL" id="AB040415">
    <property type="protein sequence ID" value="BAB20511.1"/>
    <property type="molecule type" value="Genomic_DNA"/>
</dbReference>
<dbReference type="EMBL" id="AY509003">
    <property type="protein sequence ID" value="AAS58877.1"/>
    <property type="molecule type" value="Genomic_DNA"/>
</dbReference>
<dbReference type="PIR" id="S09498">
    <property type="entry name" value="S09498"/>
</dbReference>
<dbReference type="RefSeq" id="WP_001541538.1">
    <property type="nucleotide sequence ID" value="NC_006855.1"/>
</dbReference>
<dbReference type="SMR" id="P17450"/>
<dbReference type="KEGG" id="sec:SCH_V04"/>
<dbReference type="HOGENOM" id="CLU_458478_0_0_6"/>
<dbReference type="Proteomes" id="UP000000538">
    <property type="component" value="Plasmid pSCV50"/>
</dbReference>
<dbReference type="GO" id="GO:0005737">
    <property type="term" value="C:cytoplasm"/>
    <property type="evidence" value="ECO:0007669"/>
    <property type="project" value="InterPro"/>
</dbReference>
<dbReference type="GO" id="GO:0005576">
    <property type="term" value="C:extracellular region"/>
    <property type="evidence" value="ECO:0007669"/>
    <property type="project" value="UniProtKB-SubCell"/>
</dbReference>
<dbReference type="GO" id="GO:0106274">
    <property type="term" value="F:NAD+-protein-arginine ADP-ribosyltransferase activity"/>
    <property type="evidence" value="ECO:0007669"/>
    <property type="project" value="UniProtKB-EC"/>
</dbReference>
<dbReference type="GO" id="GO:0000166">
    <property type="term" value="F:nucleotide binding"/>
    <property type="evidence" value="ECO:0007669"/>
    <property type="project" value="UniProtKB-KW"/>
</dbReference>
<dbReference type="GO" id="GO:0016779">
    <property type="term" value="F:nucleotidyltransferase activity"/>
    <property type="evidence" value="ECO:0007669"/>
    <property type="project" value="UniProtKB-KW"/>
</dbReference>
<dbReference type="GO" id="GO:0090729">
    <property type="term" value="F:toxin activity"/>
    <property type="evidence" value="ECO:0007669"/>
    <property type="project" value="UniProtKB-KW"/>
</dbReference>
<dbReference type="Gene3D" id="3.90.176.10">
    <property type="entry name" value="Toxin ADP-ribosyltransferase, Chain A, domain 1"/>
    <property type="match status" value="1"/>
</dbReference>
<dbReference type="InterPro" id="IPR003540">
    <property type="entry name" value="ADP-ribosyltransferase"/>
</dbReference>
<dbReference type="InterPro" id="IPR003284">
    <property type="entry name" value="Sal_SpvB"/>
</dbReference>
<dbReference type="NCBIfam" id="NF011780">
    <property type="entry name" value="PRK15244.1"/>
    <property type="match status" value="1"/>
</dbReference>
<dbReference type="Pfam" id="PF03496">
    <property type="entry name" value="ADPrib_exo_Tox"/>
    <property type="match status" value="1"/>
</dbReference>
<dbReference type="Pfam" id="PF03534">
    <property type="entry name" value="SpvB"/>
    <property type="match status" value="1"/>
</dbReference>
<dbReference type="PRINTS" id="PR01341">
    <property type="entry name" value="SALSPVBPROT"/>
</dbReference>
<dbReference type="SUPFAM" id="SSF56399">
    <property type="entry name" value="ADP-ribosylation"/>
    <property type="match status" value="1"/>
</dbReference>
<dbReference type="PROSITE" id="PS51996">
    <property type="entry name" value="TR_MART"/>
    <property type="match status" value="1"/>
</dbReference>
<name>SPVB_SALCH</name>
<reference key="1">
    <citation type="journal article" date="1990" name="Nucleic Acids Res.">
        <title>Nucleotide sequences of genes encoding 32 kDa and 70 kDa polypeptides in mba region of the virulence plasmid, pKDSc50, of Salmonella choleraesuis.</title>
        <authorList>
            <person name="Matsui H."/>
        </authorList>
    </citation>
    <scope>NUCLEOTIDE SEQUENCE [GENOMIC DNA]</scope>
    <source>
        <strain>RF-1</strain>
        <plasmid>pKDSc50</plasmid>
    </source>
</reference>
<reference key="2">
    <citation type="journal article" date="2001" name="Infect. Immun.">
        <title>Complete DNA sequence and comparative analysis of the 50-kilobase virulence plasmid of Salmonella enterica serovar Choleraesuis.</title>
        <authorList>
            <person name="Haneda T."/>
            <person name="Okada N."/>
            <person name="Nakazawa N."/>
            <person name="Kawakami T."/>
            <person name="Danbara H."/>
        </authorList>
    </citation>
    <scope>NUCLEOTIDE SEQUENCE [GENOMIC DNA]</scope>
    <source>
        <strain>RF-1</strain>
        <plasmid>pKDSc50</plasmid>
    </source>
</reference>
<reference key="3">
    <citation type="journal article" date="2005" name="Nucleic Acids Res.">
        <title>The genome sequence of Salmonella enterica serovar Choleraesuis, a highly invasive and resistant zoonotic pathogen.</title>
        <authorList>
            <person name="Chiu C.-H."/>
            <person name="Tang P."/>
            <person name="Chu C."/>
            <person name="Hu S."/>
            <person name="Bao Q."/>
            <person name="Yu J."/>
            <person name="Chou Y.-Y."/>
            <person name="Wang H.-S."/>
            <person name="Lee Y.-S."/>
        </authorList>
    </citation>
    <scope>NUCLEOTIDE SEQUENCE [LARGE SCALE GENOMIC DNA]</scope>
    <source>
        <strain>SC-B67</strain>
        <plasmid>pSCV50</plasmid>
    </source>
</reference>
<sequence length="591" mass="65272">MLILNGFSSATLALITPPSLPKGGKALSQSGPDGLASITLPLPISAERGFAPALALHYSSGGGNGPFGVGWSCATMSIARSTSHGVPQYNDSDEFLGPDGEVLVQTLSTGDAPNPVTCFAYGDVSFPQSYTVTRYQPRTESSFYRLEYWVGNSNGDDFWLLHDSNGILHLLGKTAAARLSDPQAASHTAQWLVEESVTPAGEHIYYSYLAENGDNVDLNGNEAGRDRSAMRYLSKVQYGNATPAADLYLWTSATPAVQWLFTLVFDYGERGVDPQVPPAFTAQNSWLARQDPFSLYNYGFEIRLHRLCRQVLMFHHFPDELGEADTLVSRLLLEYDENPILTQLCAARTLAYEGDGYRRAPVNNIMPPPPPPPMMGGNSSRPKSKWAIVEESKQIQALRYYSAQGYSVINKYLRGDDYPETQAKETLLSRDYLSTNEPSDEEFKNAMSVYINDIAEGLSSLPETDHRVVYRGLKLDKPALSDVLKEYTTIGNIIIDKAFMSTSPDKAWINDTILNIYLEKGHKGRILGDVAHFKGEAEMLFPPNTKLKIESIVNCGSQDFASQLSKLRLSDDATADTNRIKRIINMRVLNS</sequence>
<proteinExistence type="inferred from homology"/>
<gene>
    <name type="primary">spvB</name>
    <name type="ordered locus">SCH_V04</name>
</gene>
<evidence type="ECO:0000250" key="1"/>
<evidence type="ECO:0000255" key="2">
    <source>
        <dbReference type="PROSITE-ProRule" id="PRU01340"/>
    </source>
</evidence>
<evidence type="ECO:0000305" key="3"/>
<protein>
    <recommendedName>
        <fullName>Mono(ADP-ribosyl)transferase SpvB</fullName>
        <shortName>mADPRT</shortName>
        <shortName>mART</shortName>
        <ecNumber>2.4.2.31</ecNumber>
    </recommendedName>
    <alternativeName>
        <fullName>65 kDa virulence protein</fullName>
    </alternativeName>
    <alternativeName>
        <fullName>NAD(+)--arginine ADP-ribosyltransferase</fullName>
    </alternativeName>
    <alternativeName>
        <fullName>Protein M2 in mba region</fullName>
    </alternativeName>
    <alternativeName>
        <fullName>Toxin SpvB</fullName>
    </alternativeName>
</protein>
<keyword id="KW-0328">Glycosyltransferase</keyword>
<keyword id="KW-0520">NAD</keyword>
<keyword id="KW-0521">NADP</keyword>
<keyword id="KW-0547">Nucleotide-binding</keyword>
<keyword id="KW-0548">Nucleotidyltransferase</keyword>
<keyword id="KW-0614">Plasmid</keyword>
<keyword id="KW-0964">Secreted</keyword>
<keyword id="KW-0800">Toxin</keyword>
<keyword id="KW-0808">Transferase</keyword>
<keyword id="KW-0843">Virulence</keyword>